<sequence length="476" mass="53293">MTEVVHLHMPEEARATQSRDATPRERRYYVWTVGCQMNVSDSERLEAALQGVGYAPAERPEDASFIVLNSCSVRASAEERILGKLSEVQRLKRKHPDTKVVLWGCMVGPGNQSIFQSRLPMVDHFVSPSAVDEVLALAPNPIYQLEEPALPVARWDHPPVSVHVPIQYGCNMSCSFCVIPLRRGRERSRPLDEIVEECRRIVARGAKEITLLGQIVDSWGHDLPGRPDLADLLRAVHDIPGLLRLRFLTSHPAWMTDRLIAAVAELPRCMPDINLPVQAGDDALLKIMRRGYTVQRYRDLIAKIRDAIPDVSLTTDVIVGHPGETRERFEGTKRLLEDIRFDKVHIAAFSSRPGTRAADMELDPTLAVPEGEKQLRRIELERLQEQIAAERNARFLHQTVEVLVEGEHKGKWRGRTPGNKLVFFSDPDDWTGRLARVIITHTGPWSLQGVLARSDETFARVNGALHAVAAANGAAV</sequence>
<accession>A5UUG7</accession>
<dbReference type="EC" id="2.8.4.3" evidence="1"/>
<dbReference type="EMBL" id="CP000686">
    <property type="protein sequence ID" value="ABQ90270.1"/>
    <property type="molecule type" value="Genomic_DNA"/>
</dbReference>
<dbReference type="SMR" id="A5UUG7"/>
<dbReference type="STRING" id="357808.RoseRS_1881"/>
<dbReference type="KEGG" id="rrs:RoseRS_1881"/>
<dbReference type="eggNOG" id="COG0621">
    <property type="taxonomic scope" value="Bacteria"/>
</dbReference>
<dbReference type="HOGENOM" id="CLU_018697_2_0_0"/>
<dbReference type="OrthoDB" id="9805215at2"/>
<dbReference type="Proteomes" id="UP000006554">
    <property type="component" value="Chromosome"/>
</dbReference>
<dbReference type="GO" id="GO:0005829">
    <property type="term" value="C:cytosol"/>
    <property type="evidence" value="ECO:0007669"/>
    <property type="project" value="TreeGrafter"/>
</dbReference>
<dbReference type="GO" id="GO:0051539">
    <property type="term" value="F:4 iron, 4 sulfur cluster binding"/>
    <property type="evidence" value="ECO:0007669"/>
    <property type="project" value="UniProtKB-UniRule"/>
</dbReference>
<dbReference type="GO" id="GO:0046872">
    <property type="term" value="F:metal ion binding"/>
    <property type="evidence" value="ECO:0007669"/>
    <property type="project" value="UniProtKB-KW"/>
</dbReference>
<dbReference type="GO" id="GO:0035597">
    <property type="term" value="F:N6-isopentenyladenosine methylthiotransferase activity"/>
    <property type="evidence" value="ECO:0007669"/>
    <property type="project" value="TreeGrafter"/>
</dbReference>
<dbReference type="CDD" id="cd01335">
    <property type="entry name" value="Radical_SAM"/>
    <property type="match status" value="1"/>
</dbReference>
<dbReference type="FunFam" id="3.40.50.12160:FF:000003">
    <property type="entry name" value="CDK5 regulatory subunit-associated protein 1"/>
    <property type="match status" value="1"/>
</dbReference>
<dbReference type="FunFam" id="3.80.30.20:FF:000001">
    <property type="entry name" value="tRNA-2-methylthio-N(6)-dimethylallyladenosine synthase 2"/>
    <property type="match status" value="1"/>
</dbReference>
<dbReference type="Gene3D" id="3.40.50.12160">
    <property type="entry name" value="Methylthiotransferase, N-terminal domain"/>
    <property type="match status" value="1"/>
</dbReference>
<dbReference type="Gene3D" id="3.80.30.20">
    <property type="entry name" value="tm_1862 like domain"/>
    <property type="match status" value="1"/>
</dbReference>
<dbReference type="HAMAP" id="MF_01864">
    <property type="entry name" value="tRNA_metthiotr_MiaB"/>
    <property type="match status" value="1"/>
</dbReference>
<dbReference type="InterPro" id="IPR006638">
    <property type="entry name" value="Elp3/MiaA/NifB-like_rSAM"/>
</dbReference>
<dbReference type="InterPro" id="IPR005839">
    <property type="entry name" value="Methylthiotransferase"/>
</dbReference>
<dbReference type="InterPro" id="IPR020612">
    <property type="entry name" value="Methylthiotransferase_CS"/>
</dbReference>
<dbReference type="InterPro" id="IPR013848">
    <property type="entry name" value="Methylthiotransferase_N"/>
</dbReference>
<dbReference type="InterPro" id="IPR038135">
    <property type="entry name" value="Methylthiotransferase_N_sf"/>
</dbReference>
<dbReference type="InterPro" id="IPR006463">
    <property type="entry name" value="MiaB_methiolase"/>
</dbReference>
<dbReference type="InterPro" id="IPR000385">
    <property type="entry name" value="MoaA_NifB_PqqE_Fe-S-bd_CS"/>
</dbReference>
<dbReference type="InterPro" id="IPR007197">
    <property type="entry name" value="rSAM"/>
</dbReference>
<dbReference type="InterPro" id="IPR023404">
    <property type="entry name" value="rSAM_horseshoe"/>
</dbReference>
<dbReference type="InterPro" id="IPR002792">
    <property type="entry name" value="TRAM_dom"/>
</dbReference>
<dbReference type="NCBIfam" id="TIGR00089">
    <property type="entry name" value="MiaB/RimO family radical SAM methylthiotransferase"/>
    <property type="match status" value="1"/>
</dbReference>
<dbReference type="PANTHER" id="PTHR43020">
    <property type="entry name" value="CDK5 REGULATORY SUBUNIT-ASSOCIATED PROTEIN 1"/>
    <property type="match status" value="1"/>
</dbReference>
<dbReference type="PANTHER" id="PTHR43020:SF2">
    <property type="entry name" value="MITOCHONDRIAL TRNA METHYLTHIOTRANSFERASE CDK5RAP1"/>
    <property type="match status" value="1"/>
</dbReference>
<dbReference type="Pfam" id="PF04055">
    <property type="entry name" value="Radical_SAM"/>
    <property type="match status" value="1"/>
</dbReference>
<dbReference type="Pfam" id="PF01938">
    <property type="entry name" value="TRAM"/>
    <property type="match status" value="1"/>
</dbReference>
<dbReference type="Pfam" id="PF00919">
    <property type="entry name" value="UPF0004"/>
    <property type="match status" value="1"/>
</dbReference>
<dbReference type="SFLD" id="SFLDG01082">
    <property type="entry name" value="B12-binding_domain_containing"/>
    <property type="match status" value="1"/>
</dbReference>
<dbReference type="SFLD" id="SFLDG01061">
    <property type="entry name" value="methylthiotransferase"/>
    <property type="match status" value="1"/>
</dbReference>
<dbReference type="SFLD" id="SFLDS00029">
    <property type="entry name" value="Radical_SAM"/>
    <property type="match status" value="1"/>
</dbReference>
<dbReference type="SMART" id="SM00729">
    <property type="entry name" value="Elp3"/>
    <property type="match status" value="1"/>
</dbReference>
<dbReference type="SUPFAM" id="SSF102114">
    <property type="entry name" value="Radical SAM enzymes"/>
    <property type="match status" value="1"/>
</dbReference>
<dbReference type="PROSITE" id="PS51449">
    <property type="entry name" value="MTTASE_N"/>
    <property type="match status" value="1"/>
</dbReference>
<dbReference type="PROSITE" id="PS01278">
    <property type="entry name" value="MTTASE_RADICAL"/>
    <property type="match status" value="1"/>
</dbReference>
<dbReference type="PROSITE" id="PS51918">
    <property type="entry name" value="RADICAL_SAM"/>
    <property type="match status" value="1"/>
</dbReference>
<dbReference type="PROSITE" id="PS50926">
    <property type="entry name" value="TRAM"/>
    <property type="match status" value="1"/>
</dbReference>
<gene>
    <name evidence="1" type="primary">miaB</name>
    <name type="ordered locus">RoseRS_1881</name>
</gene>
<proteinExistence type="inferred from homology"/>
<reference key="1">
    <citation type="submission" date="2007-04" db="EMBL/GenBank/DDBJ databases">
        <title>Complete sequence of Roseiflexus sp. RS-1.</title>
        <authorList>
            <consortium name="US DOE Joint Genome Institute"/>
            <person name="Copeland A."/>
            <person name="Lucas S."/>
            <person name="Lapidus A."/>
            <person name="Barry K."/>
            <person name="Detter J.C."/>
            <person name="Glavina del Rio T."/>
            <person name="Hammon N."/>
            <person name="Israni S."/>
            <person name="Dalin E."/>
            <person name="Tice H."/>
            <person name="Pitluck S."/>
            <person name="Chertkov O."/>
            <person name="Brettin T."/>
            <person name="Bruce D."/>
            <person name="Han C."/>
            <person name="Schmutz J."/>
            <person name="Larimer F."/>
            <person name="Land M."/>
            <person name="Hauser L."/>
            <person name="Kyrpides N."/>
            <person name="Mikhailova N."/>
            <person name="Bryant D.A."/>
            <person name="Richardson P."/>
        </authorList>
    </citation>
    <scope>NUCLEOTIDE SEQUENCE [LARGE SCALE GENOMIC DNA]</scope>
    <source>
        <strain>RS-1</strain>
    </source>
</reference>
<organism>
    <name type="scientific">Roseiflexus sp. (strain RS-1)</name>
    <dbReference type="NCBI Taxonomy" id="357808"/>
    <lineage>
        <taxon>Bacteria</taxon>
        <taxon>Bacillati</taxon>
        <taxon>Chloroflexota</taxon>
        <taxon>Chloroflexia</taxon>
        <taxon>Chloroflexales</taxon>
        <taxon>Roseiflexineae</taxon>
        <taxon>Roseiflexaceae</taxon>
        <taxon>Roseiflexus</taxon>
    </lineage>
</organism>
<feature type="chain" id="PRO_0000374511" description="tRNA-2-methylthio-N(6)-dimethylallyladenosine synthase">
    <location>
        <begin position="1"/>
        <end position="476"/>
    </location>
</feature>
<feature type="domain" description="MTTase N-terminal" evidence="1">
    <location>
        <begin position="26"/>
        <end position="147"/>
    </location>
</feature>
<feature type="domain" description="Radical SAM core" evidence="2">
    <location>
        <begin position="156"/>
        <end position="390"/>
    </location>
</feature>
<feature type="domain" description="TRAM" evidence="1">
    <location>
        <begin position="393"/>
        <end position="453"/>
    </location>
</feature>
<feature type="region of interest" description="Disordered" evidence="3">
    <location>
        <begin position="1"/>
        <end position="20"/>
    </location>
</feature>
<feature type="compositionally biased region" description="Basic and acidic residues" evidence="3">
    <location>
        <begin position="1"/>
        <end position="14"/>
    </location>
</feature>
<feature type="binding site" evidence="1">
    <location>
        <position position="35"/>
    </location>
    <ligand>
        <name>[4Fe-4S] cluster</name>
        <dbReference type="ChEBI" id="CHEBI:49883"/>
        <label>1</label>
    </ligand>
</feature>
<feature type="binding site" evidence="1">
    <location>
        <position position="71"/>
    </location>
    <ligand>
        <name>[4Fe-4S] cluster</name>
        <dbReference type="ChEBI" id="CHEBI:49883"/>
        <label>1</label>
    </ligand>
</feature>
<feature type="binding site" evidence="1">
    <location>
        <position position="105"/>
    </location>
    <ligand>
        <name>[4Fe-4S] cluster</name>
        <dbReference type="ChEBI" id="CHEBI:49883"/>
        <label>1</label>
    </ligand>
</feature>
<feature type="binding site" evidence="1">
    <location>
        <position position="170"/>
    </location>
    <ligand>
        <name>[4Fe-4S] cluster</name>
        <dbReference type="ChEBI" id="CHEBI:49883"/>
        <label>2</label>
        <note>4Fe-4S-S-AdoMet</note>
    </ligand>
</feature>
<feature type="binding site" evidence="1">
    <location>
        <position position="174"/>
    </location>
    <ligand>
        <name>[4Fe-4S] cluster</name>
        <dbReference type="ChEBI" id="CHEBI:49883"/>
        <label>2</label>
        <note>4Fe-4S-S-AdoMet</note>
    </ligand>
</feature>
<feature type="binding site" evidence="1">
    <location>
        <position position="177"/>
    </location>
    <ligand>
        <name>[4Fe-4S] cluster</name>
        <dbReference type="ChEBI" id="CHEBI:49883"/>
        <label>2</label>
        <note>4Fe-4S-S-AdoMet</note>
    </ligand>
</feature>
<protein>
    <recommendedName>
        <fullName evidence="1">tRNA-2-methylthio-N(6)-dimethylallyladenosine synthase</fullName>
        <ecNumber evidence="1">2.8.4.3</ecNumber>
    </recommendedName>
    <alternativeName>
        <fullName evidence="1">(Dimethylallyl)adenosine tRNA methylthiotransferase MiaB</fullName>
    </alternativeName>
    <alternativeName>
        <fullName evidence="1">tRNA-i(6)A37 methylthiotransferase</fullName>
    </alternativeName>
</protein>
<keyword id="KW-0004">4Fe-4S</keyword>
<keyword id="KW-0963">Cytoplasm</keyword>
<keyword id="KW-0408">Iron</keyword>
<keyword id="KW-0411">Iron-sulfur</keyword>
<keyword id="KW-0479">Metal-binding</keyword>
<keyword id="KW-0949">S-adenosyl-L-methionine</keyword>
<keyword id="KW-0808">Transferase</keyword>
<keyword id="KW-0819">tRNA processing</keyword>
<name>MIAB_ROSS1</name>
<comment type="function">
    <text evidence="1">Catalyzes the methylthiolation of N6-(dimethylallyl)adenosine (i(6)A), leading to the formation of 2-methylthio-N6-(dimethylallyl)adenosine (ms(2)i(6)A) at position 37 in tRNAs that read codons beginning with uridine.</text>
</comment>
<comment type="catalytic activity">
    <reaction evidence="1">
        <text>N(6)-dimethylallyladenosine(37) in tRNA + (sulfur carrier)-SH + AH2 + 2 S-adenosyl-L-methionine = 2-methylsulfanyl-N(6)-dimethylallyladenosine(37) in tRNA + (sulfur carrier)-H + 5'-deoxyadenosine + L-methionine + A + S-adenosyl-L-homocysteine + 2 H(+)</text>
        <dbReference type="Rhea" id="RHEA:37067"/>
        <dbReference type="Rhea" id="RHEA-COMP:10375"/>
        <dbReference type="Rhea" id="RHEA-COMP:10376"/>
        <dbReference type="Rhea" id="RHEA-COMP:14737"/>
        <dbReference type="Rhea" id="RHEA-COMP:14739"/>
        <dbReference type="ChEBI" id="CHEBI:13193"/>
        <dbReference type="ChEBI" id="CHEBI:15378"/>
        <dbReference type="ChEBI" id="CHEBI:17319"/>
        <dbReference type="ChEBI" id="CHEBI:17499"/>
        <dbReference type="ChEBI" id="CHEBI:29917"/>
        <dbReference type="ChEBI" id="CHEBI:57844"/>
        <dbReference type="ChEBI" id="CHEBI:57856"/>
        <dbReference type="ChEBI" id="CHEBI:59789"/>
        <dbReference type="ChEBI" id="CHEBI:64428"/>
        <dbReference type="ChEBI" id="CHEBI:74415"/>
        <dbReference type="ChEBI" id="CHEBI:74417"/>
        <dbReference type="EC" id="2.8.4.3"/>
    </reaction>
</comment>
<comment type="cofactor">
    <cofactor evidence="1">
        <name>[4Fe-4S] cluster</name>
        <dbReference type="ChEBI" id="CHEBI:49883"/>
    </cofactor>
    <text evidence="1">Binds 2 [4Fe-4S] clusters. One cluster is coordinated with 3 cysteines and an exchangeable S-adenosyl-L-methionine.</text>
</comment>
<comment type="subunit">
    <text evidence="1">Monomer.</text>
</comment>
<comment type="subcellular location">
    <subcellularLocation>
        <location evidence="1">Cytoplasm</location>
    </subcellularLocation>
</comment>
<comment type="similarity">
    <text evidence="1">Belongs to the methylthiotransferase family. MiaB subfamily.</text>
</comment>
<evidence type="ECO:0000255" key="1">
    <source>
        <dbReference type="HAMAP-Rule" id="MF_01864"/>
    </source>
</evidence>
<evidence type="ECO:0000255" key="2">
    <source>
        <dbReference type="PROSITE-ProRule" id="PRU01266"/>
    </source>
</evidence>
<evidence type="ECO:0000256" key="3">
    <source>
        <dbReference type="SAM" id="MobiDB-lite"/>
    </source>
</evidence>